<feature type="initiator methionine" description="Removed" evidence="4">
    <location>
        <position position="1"/>
    </location>
</feature>
<feature type="chain" id="PRO_0000067490" description="Annexin A5">
    <location>
        <begin position="2"/>
        <end position="319"/>
    </location>
</feature>
<feature type="repeat" description="Annexin 1" evidence="3">
    <location>
        <begin position="13"/>
        <end position="84"/>
    </location>
</feature>
<feature type="repeat" description="Annexin 2" evidence="3">
    <location>
        <begin position="85"/>
        <end position="156"/>
    </location>
</feature>
<feature type="repeat" description="Annexin 3" evidence="3">
    <location>
        <begin position="168"/>
        <end position="240"/>
    </location>
</feature>
<feature type="repeat" description="Annexin 4" evidence="3">
    <location>
        <begin position="244"/>
        <end position="315"/>
    </location>
</feature>
<feature type="short sequence motif" description="[IL]-x-C-x-x-[DE] motif" evidence="1">
    <location>
        <begin position="312"/>
        <end position="318"/>
    </location>
</feature>
<feature type="modified residue" description="N-acetylalanine" evidence="4">
    <location>
        <position position="2"/>
    </location>
</feature>
<feature type="modified residue" description="Phosphoserine" evidence="6">
    <location>
        <position position="35"/>
    </location>
</feature>
<feature type="modified residue" description="N6-acetyllysine" evidence="1">
    <location>
        <position position="68"/>
    </location>
</feature>
<feature type="modified residue" description="N6-acetyllysine" evidence="1">
    <location>
        <position position="74"/>
    </location>
</feature>
<feature type="modified residue" description="N6-acetyllysine" evidence="1">
    <location>
        <position position="77"/>
    </location>
</feature>
<feature type="modified residue" description="N6-acetyllysine" evidence="1">
    <location>
        <position position="95"/>
    </location>
</feature>
<feature type="modified residue" description="N6-acetyllysine" evidence="1">
    <location>
        <position position="99"/>
    </location>
</feature>
<feature type="modified residue" description="N6-succinyllysine" evidence="2">
    <location>
        <position position="288"/>
    </location>
</feature>
<feature type="cross-link" description="Glycyl lysine isopeptide (Lys-Gly) (interchain with G-Cter in SUMO1); alternate" evidence="1">
    <location>
        <position position="27"/>
    </location>
</feature>
<feature type="cross-link" description="Glycyl lysine isopeptide (Lys-Gly) (interchain with G-Cter in SUMO2); alternate" evidence="1">
    <location>
        <position position="27"/>
    </location>
</feature>
<feature type="helix" evidence="7">
    <location>
        <begin position="15"/>
        <end position="26"/>
    </location>
</feature>
<feature type="strand" evidence="7">
    <location>
        <begin position="27"/>
        <end position="30"/>
    </location>
</feature>
<feature type="helix" evidence="7">
    <location>
        <begin position="33"/>
        <end position="40"/>
    </location>
</feature>
<feature type="helix" evidence="7">
    <location>
        <begin position="45"/>
        <end position="59"/>
    </location>
</feature>
<feature type="helix" evidence="7">
    <location>
        <begin position="63"/>
        <end position="70"/>
    </location>
</feature>
<feature type="helix" evidence="7">
    <location>
        <begin position="73"/>
        <end position="83"/>
    </location>
</feature>
<feature type="helix" evidence="7">
    <location>
        <begin position="86"/>
        <end position="97"/>
    </location>
</feature>
<feature type="helix" evidence="7">
    <location>
        <begin position="100"/>
        <end position="102"/>
    </location>
</feature>
<feature type="helix" evidence="7">
    <location>
        <begin position="105"/>
        <end position="114"/>
    </location>
</feature>
<feature type="helix" evidence="7">
    <location>
        <begin position="117"/>
        <end position="131"/>
    </location>
</feature>
<feature type="helix" evidence="7">
    <location>
        <begin position="135"/>
        <end position="142"/>
    </location>
</feature>
<feature type="helix" evidence="7">
    <location>
        <begin position="145"/>
        <end position="155"/>
    </location>
</feature>
<feature type="helix" evidence="7">
    <location>
        <begin position="167"/>
        <end position="180"/>
    </location>
</feature>
<feature type="turn" evidence="7">
    <location>
        <begin position="181"/>
        <end position="183"/>
    </location>
</feature>
<feature type="strand" evidence="7">
    <location>
        <begin position="184"/>
        <end position="186"/>
    </location>
</feature>
<feature type="helix" evidence="7">
    <location>
        <begin position="189"/>
        <end position="198"/>
    </location>
</feature>
<feature type="helix" evidence="7">
    <location>
        <begin position="201"/>
        <end position="215"/>
    </location>
</feature>
<feature type="helix" evidence="7">
    <location>
        <begin position="219"/>
        <end position="226"/>
    </location>
</feature>
<feature type="helix" evidence="7">
    <location>
        <begin position="229"/>
        <end position="243"/>
    </location>
</feature>
<feature type="helix" evidence="7">
    <location>
        <begin position="245"/>
        <end position="257"/>
    </location>
</feature>
<feature type="strand" evidence="7">
    <location>
        <begin position="258"/>
        <end position="261"/>
    </location>
</feature>
<feature type="helix" evidence="7">
    <location>
        <begin position="264"/>
        <end position="274"/>
    </location>
</feature>
<feature type="turn" evidence="7">
    <location>
        <begin position="275"/>
        <end position="278"/>
    </location>
</feature>
<feature type="helix" evidence="7">
    <location>
        <begin position="279"/>
        <end position="290"/>
    </location>
</feature>
<feature type="helix" evidence="7">
    <location>
        <begin position="294"/>
        <end position="301"/>
    </location>
</feature>
<feature type="helix" evidence="7">
    <location>
        <begin position="304"/>
        <end position="314"/>
    </location>
</feature>
<proteinExistence type="evidence at protein level"/>
<name>ANXA5_RAT</name>
<sequence length="319" mass="35745">MALRGTVTDFSGFDGRADAEVLRKAMKGLGTDEDSILNLLTARSNAQRQQIAEEFKTLFGRDLVNDMKSELTGKFEKLIVALMKPSRLYDAYELKHALKGAGTDEKVLTEIIASRTPEELRAIKQAYEEEYGSNLEDDVVGDTSGYYQRMLVVLLQANRDPDTAIDDAQVELDAQALFQAGELKWGTDEEKFITILGTRSVSHLRRVFDKYMTISGFQIEETIDRETSGNLENLLLAVVKSIRSIPAYLAETLYYAMKGAGTDDHTLIRVIVSRSEIDLFNIRKEFRKNFATSLYSMIKGDTSGDYKKALLLLCGGEDD</sequence>
<gene>
    <name type="primary">Anxa5</name>
    <name type="synonym">Anx5</name>
</gene>
<accession>P14668</accession>
<comment type="function">
    <text>This protein is an anticoagulant protein that acts as an indirect inhibitor of the thromboplastin-specific complex, which is involved in the blood coagulation cascade.</text>
</comment>
<comment type="subunit">
    <text>Monomer. Binds ATRX, EIF5B and DNMT1.</text>
</comment>
<comment type="domain">
    <text>A pair of annexin repeats may form one binding site for calcium and phospholipid.</text>
</comment>
<comment type="domain">
    <text evidence="1">The [IL]-x-C-x-x-[DE] motif is a proposed target motif for cysteine S-nitrosylation mediated by the iNOS-S100A8/A9 transnitrosylase complex.</text>
</comment>
<comment type="PTM">
    <text evidence="1">S-nitrosylation is induced by interferon-gamma and oxidatively-modified low-densitity lipoprotein (LDL(ox)) possibly implicating the iNOS-S100A8/9 transnitrosylase complex.</text>
</comment>
<comment type="similarity">
    <text evidence="3 5">Belongs to the annexin family.</text>
</comment>
<evidence type="ECO:0000250" key="1">
    <source>
        <dbReference type="UniProtKB" id="P08758"/>
    </source>
</evidence>
<evidence type="ECO:0000250" key="2">
    <source>
        <dbReference type="UniProtKB" id="P48036"/>
    </source>
</evidence>
<evidence type="ECO:0000255" key="3">
    <source>
        <dbReference type="PROSITE-ProRule" id="PRU01245"/>
    </source>
</evidence>
<evidence type="ECO:0000269" key="4">
    <source>
    </source>
</evidence>
<evidence type="ECO:0000305" key="5"/>
<evidence type="ECO:0007744" key="6">
    <source>
    </source>
</evidence>
<evidence type="ECO:0007829" key="7">
    <source>
        <dbReference type="PDB" id="2IE7"/>
    </source>
</evidence>
<keyword id="KW-0002">3D-structure</keyword>
<keyword id="KW-0007">Acetylation</keyword>
<keyword id="KW-0041">Annexin</keyword>
<keyword id="KW-0094">Blood coagulation</keyword>
<keyword id="KW-0106">Calcium</keyword>
<keyword id="KW-0111">Calcium/phospholipid-binding</keyword>
<keyword id="KW-0903">Direct protein sequencing</keyword>
<keyword id="KW-0356">Hemostasis</keyword>
<keyword id="KW-1017">Isopeptide bond</keyword>
<keyword id="KW-0597">Phosphoprotein</keyword>
<keyword id="KW-1185">Reference proteome</keyword>
<keyword id="KW-0677">Repeat</keyword>
<keyword id="KW-0702">S-nitrosylation</keyword>
<keyword id="KW-0832">Ubl conjugation</keyword>
<dbReference type="EMBL" id="M21730">
    <property type="protein sequence ID" value="AAA41512.1"/>
    <property type="molecule type" value="mRNA"/>
</dbReference>
<dbReference type="EMBL" id="D42137">
    <property type="protein sequence ID" value="BAA07708.1"/>
    <property type="molecule type" value="Genomic_DNA"/>
</dbReference>
<dbReference type="PIR" id="C29250">
    <property type="entry name" value="LURT5"/>
</dbReference>
<dbReference type="RefSeq" id="NP_037264.1">
    <property type="nucleotide sequence ID" value="NM_013132.1"/>
</dbReference>
<dbReference type="PDB" id="1A8A">
    <property type="method" value="X-ray"/>
    <property type="resolution" value="1.90 A"/>
    <property type="chains" value="A=2-319"/>
</dbReference>
<dbReference type="PDB" id="1A8B">
    <property type="method" value="X-ray"/>
    <property type="resolution" value="1.90 A"/>
    <property type="chains" value="A=2-319"/>
</dbReference>
<dbReference type="PDB" id="1BC0">
    <property type="method" value="X-ray"/>
    <property type="resolution" value="2.00 A"/>
    <property type="chains" value="A=1-319"/>
</dbReference>
<dbReference type="PDB" id="1BC1">
    <property type="method" value="X-ray"/>
    <property type="resolution" value="2.05 A"/>
    <property type="chains" value="A=1-319"/>
</dbReference>
<dbReference type="PDB" id="1BC3">
    <property type="method" value="X-ray"/>
    <property type="resolution" value="1.95 A"/>
    <property type="chains" value="A=1-319"/>
</dbReference>
<dbReference type="PDB" id="1BCW">
    <property type="method" value="X-ray"/>
    <property type="resolution" value="2.10 A"/>
    <property type="chains" value="A=1-319"/>
</dbReference>
<dbReference type="PDB" id="1BCY">
    <property type="method" value="X-ray"/>
    <property type="resolution" value="1.95 A"/>
    <property type="chains" value="A=1-319"/>
</dbReference>
<dbReference type="PDB" id="1BCZ">
    <property type="method" value="X-ray"/>
    <property type="resolution" value="2.20 A"/>
    <property type="chains" value="A=1-319"/>
</dbReference>
<dbReference type="PDB" id="1G5N">
    <property type="method" value="X-ray"/>
    <property type="resolution" value="1.90 A"/>
    <property type="chains" value="A=2-319"/>
</dbReference>
<dbReference type="PDB" id="1N41">
    <property type="method" value="X-ray"/>
    <property type="resolution" value="2.10 A"/>
    <property type="chains" value="A=1-319"/>
</dbReference>
<dbReference type="PDB" id="1N42">
    <property type="method" value="X-ray"/>
    <property type="resolution" value="2.10 A"/>
    <property type="chains" value="A=1-319"/>
</dbReference>
<dbReference type="PDB" id="1N44">
    <property type="method" value="X-ray"/>
    <property type="resolution" value="3.00 A"/>
    <property type="chains" value="A=1-319"/>
</dbReference>
<dbReference type="PDB" id="2H0K">
    <property type="method" value="X-ray"/>
    <property type="resolution" value="2.76 A"/>
    <property type="chains" value="A/B=2-319"/>
</dbReference>
<dbReference type="PDB" id="2H0L">
    <property type="method" value="X-ray"/>
    <property type="resolution" value="2.59 A"/>
    <property type="chains" value="A=2-319"/>
</dbReference>
<dbReference type="PDB" id="2H0M">
    <property type="method" value="X-ray"/>
    <property type="resolution" value="2.26 A"/>
    <property type="chains" value="A=1-318"/>
</dbReference>
<dbReference type="PDB" id="2IE6">
    <property type="method" value="X-ray"/>
    <property type="resolution" value="1.83 A"/>
    <property type="chains" value="A=2-319"/>
</dbReference>
<dbReference type="PDB" id="2IE7">
    <property type="method" value="X-ray"/>
    <property type="resolution" value="1.75 A"/>
    <property type="chains" value="A=2-319"/>
</dbReference>
<dbReference type="PDB" id="2RAN">
    <property type="method" value="X-ray"/>
    <property type="resolution" value="1.89 A"/>
    <property type="chains" value="A=2-317"/>
</dbReference>
<dbReference type="PDBsum" id="1A8A"/>
<dbReference type="PDBsum" id="1A8B"/>
<dbReference type="PDBsum" id="1BC0"/>
<dbReference type="PDBsum" id="1BC1"/>
<dbReference type="PDBsum" id="1BC3"/>
<dbReference type="PDBsum" id="1BCW"/>
<dbReference type="PDBsum" id="1BCY"/>
<dbReference type="PDBsum" id="1BCZ"/>
<dbReference type="PDBsum" id="1G5N"/>
<dbReference type="PDBsum" id="1N41"/>
<dbReference type="PDBsum" id="1N42"/>
<dbReference type="PDBsum" id="1N44"/>
<dbReference type="PDBsum" id="2H0K"/>
<dbReference type="PDBsum" id="2H0L"/>
<dbReference type="PDBsum" id="2H0M"/>
<dbReference type="PDBsum" id="2IE6"/>
<dbReference type="PDBsum" id="2IE7"/>
<dbReference type="PDBsum" id="2RAN"/>
<dbReference type="SMR" id="P14668"/>
<dbReference type="BioGRID" id="247702">
    <property type="interactions" value="3"/>
</dbReference>
<dbReference type="FunCoup" id="P14668">
    <property type="interactions" value="1402"/>
</dbReference>
<dbReference type="IntAct" id="P14668">
    <property type="interactions" value="1"/>
</dbReference>
<dbReference type="MINT" id="P14668"/>
<dbReference type="STRING" id="10116.ENSRNOP00000019552"/>
<dbReference type="iPTMnet" id="P14668"/>
<dbReference type="PhosphoSitePlus" id="P14668"/>
<dbReference type="jPOST" id="P14668"/>
<dbReference type="PaxDb" id="10116-ENSRNOP00000019552"/>
<dbReference type="GeneID" id="25673"/>
<dbReference type="KEGG" id="rno:25673"/>
<dbReference type="UCSC" id="RGD:2120">
    <property type="organism name" value="rat"/>
</dbReference>
<dbReference type="AGR" id="RGD:2120"/>
<dbReference type="CTD" id="308"/>
<dbReference type="RGD" id="2120">
    <property type="gene designation" value="Anxa5"/>
</dbReference>
<dbReference type="eggNOG" id="KOG0819">
    <property type="taxonomic scope" value="Eukaryota"/>
</dbReference>
<dbReference type="InParanoid" id="P14668"/>
<dbReference type="PhylomeDB" id="P14668"/>
<dbReference type="Reactome" id="R-RNO-114608">
    <property type="pathway name" value="Platelet degranulation"/>
</dbReference>
<dbReference type="EvolutionaryTrace" id="P14668"/>
<dbReference type="PRO" id="PR:P14668"/>
<dbReference type="Proteomes" id="UP000002494">
    <property type="component" value="Unplaced"/>
</dbReference>
<dbReference type="GO" id="GO:0043679">
    <property type="term" value="C:axon terminus"/>
    <property type="evidence" value="ECO:0000314"/>
    <property type="project" value="RGD"/>
</dbReference>
<dbReference type="GO" id="GO:0042995">
    <property type="term" value="C:cell projection"/>
    <property type="evidence" value="ECO:0000314"/>
    <property type="project" value="RGD"/>
</dbReference>
<dbReference type="GO" id="GO:0005737">
    <property type="term" value="C:cytoplasm"/>
    <property type="evidence" value="ECO:0000318"/>
    <property type="project" value="GO_Central"/>
</dbReference>
<dbReference type="GO" id="GO:0030425">
    <property type="term" value="C:dendrite"/>
    <property type="evidence" value="ECO:0000314"/>
    <property type="project" value="RGD"/>
</dbReference>
<dbReference type="GO" id="GO:0072563">
    <property type="term" value="C:endothelial microparticle"/>
    <property type="evidence" value="ECO:0000266"/>
    <property type="project" value="RGD"/>
</dbReference>
<dbReference type="GO" id="GO:0009897">
    <property type="term" value="C:external side of plasma membrane"/>
    <property type="evidence" value="ECO:0000266"/>
    <property type="project" value="RGD"/>
</dbReference>
<dbReference type="GO" id="GO:0005615">
    <property type="term" value="C:extracellular space"/>
    <property type="evidence" value="ECO:0000314"/>
    <property type="project" value="RGD"/>
</dbReference>
<dbReference type="GO" id="GO:0014704">
    <property type="term" value="C:intercalated disc"/>
    <property type="evidence" value="ECO:0000314"/>
    <property type="project" value="RGD"/>
</dbReference>
<dbReference type="GO" id="GO:0043025">
    <property type="term" value="C:neuronal cell body"/>
    <property type="evidence" value="ECO:0000314"/>
    <property type="project" value="RGD"/>
</dbReference>
<dbReference type="GO" id="GO:0043204">
    <property type="term" value="C:perikaryon"/>
    <property type="evidence" value="ECO:0000314"/>
    <property type="project" value="RGD"/>
</dbReference>
<dbReference type="GO" id="GO:0042383">
    <property type="term" value="C:sarcolemma"/>
    <property type="evidence" value="ECO:0000314"/>
    <property type="project" value="RGD"/>
</dbReference>
<dbReference type="GO" id="GO:0008021">
    <property type="term" value="C:synaptic vesicle"/>
    <property type="evidence" value="ECO:0000314"/>
    <property type="project" value="RGD"/>
</dbReference>
<dbReference type="GO" id="GO:0030672">
    <property type="term" value="C:synaptic vesicle membrane"/>
    <property type="evidence" value="ECO:0000314"/>
    <property type="project" value="SynGO"/>
</dbReference>
<dbReference type="GO" id="GO:0012506">
    <property type="term" value="C:vesicle membrane"/>
    <property type="evidence" value="ECO:0000318"/>
    <property type="project" value="GO_Central"/>
</dbReference>
<dbReference type="GO" id="GO:0030018">
    <property type="term" value="C:Z disc"/>
    <property type="evidence" value="ECO:0000314"/>
    <property type="project" value="RGD"/>
</dbReference>
<dbReference type="GO" id="GO:0005509">
    <property type="term" value="F:calcium ion binding"/>
    <property type="evidence" value="ECO:0007669"/>
    <property type="project" value="InterPro"/>
</dbReference>
<dbReference type="GO" id="GO:0005544">
    <property type="term" value="F:calcium-dependent phospholipid binding"/>
    <property type="evidence" value="ECO:0000314"/>
    <property type="project" value="RGD"/>
</dbReference>
<dbReference type="GO" id="GO:0042802">
    <property type="term" value="F:identical protein binding"/>
    <property type="evidence" value="ECO:0000353"/>
    <property type="project" value="RGD"/>
</dbReference>
<dbReference type="GO" id="GO:0005388">
    <property type="term" value="F:P-type calcium transporter activity"/>
    <property type="evidence" value="ECO:0000314"/>
    <property type="project" value="RGD"/>
</dbReference>
<dbReference type="GO" id="GO:0017046">
    <property type="term" value="F:peptide hormone binding"/>
    <property type="evidence" value="ECO:0000314"/>
    <property type="project" value="RGD"/>
</dbReference>
<dbReference type="GO" id="GO:0001786">
    <property type="term" value="F:phosphatidylserine binding"/>
    <property type="evidence" value="ECO:0000266"/>
    <property type="project" value="RGD"/>
</dbReference>
<dbReference type="GO" id="GO:0030971">
    <property type="term" value="F:receptor tyrosine kinase binding"/>
    <property type="evidence" value="ECO:0000353"/>
    <property type="project" value="RGD"/>
</dbReference>
<dbReference type="GO" id="GO:0007596">
    <property type="term" value="P:blood coagulation"/>
    <property type="evidence" value="ECO:0007669"/>
    <property type="project" value="UniProtKB-KW"/>
</dbReference>
<dbReference type="GO" id="GO:0097211">
    <property type="term" value="P:cellular response to gonadotropin-releasing hormone"/>
    <property type="evidence" value="ECO:0000315"/>
    <property type="project" value="RGD"/>
</dbReference>
<dbReference type="GO" id="GO:0071284">
    <property type="term" value="P:cellular response to lead ion"/>
    <property type="evidence" value="ECO:0000270"/>
    <property type="project" value="RGD"/>
</dbReference>
<dbReference type="GO" id="GO:0030195">
    <property type="term" value="P:negative regulation of blood coagulation"/>
    <property type="evidence" value="ECO:0000314"/>
    <property type="project" value="RGD"/>
</dbReference>
<dbReference type="GO" id="GO:1902721">
    <property type="term" value="P:negative regulation of prolactin secretion"/>
    <property type="evidence" value="ECO:0000315"/>
    <property type="project" value="RGD"/>
</dbReference>
<dbReference type="GO" id="GO:0043065">
    <property type="term" value="P:positive regulation of apoptotic process"/>
    <property type="evidence" value="ECO:0000314"/>
    <property type="project" value="RGD"/>
</dbReference>
<dbReference type="GO" id="GO:1901317">
    <property type="term" value="P:regulation of flagellated sperm motility"/>
    <property type="evidence" value="ECO:0000314"/>
    <property type="project" value="RGD"/>
</dbReference>
<dbReference type="GO" id="GO:0051592">
    <property type="term" value="P:response to calcium ion"/>
    <property type="evidence" value="ECO:0000314"/>
    <property type="project" value="RGD"/>
</dbReference>
<dbReference type="GO" id="GO:0097066">
    <property type="term" value="P:response to thyroid hormone"/>
    <property type="evidence" value="ECO:0000270"/>
    <property type="project" value="RGD"/>
</dbReference>
<dbReference type="FunFam" id="1.10.220.10:FF:000002">
    <property type="entry name" value="Annexin"/>
    <property type="match status" value="1"/>
</dbReference>
<dbReference type="FunFam" id="1.10.220.10:FF:000003">
    <property type="entry name" value="Annexin"/>
    <property type="match status" value="1"/>
</dbReference>
<dbReference type="FunFam" id="1.10.220.10:FF:000004">
    <property type="entry name" value="Annexin"/>
    <property type="match status" value="1"/>
</dbReference>
<dbReference type="FunFam" id="1.10.220.10:FF:000022">
    <property type="entry name" value="Annexin A5"/>
    <property type="match status" value="1"/>
</dbReference>
<dbReference type="Gene3D" id="1.10.220.10">
    <property type="entry name" value="Annexin"/>
    <property type="match status" value="4"/>
</dbReference>
<dbReference type="InterPro" id="IPR001464">
    <property type="entry name" value="Annexin"/>
</dbReference>
<dbReference type="InterPro" id="IPR018502">
    <property type="entry name" value="Annexin_repeat"/>
</dbReference>
<dbReference type="InterPro" id="IPR018252">
    <property type="entry name" value="Annexin_repeat_CS"/>
</dbReference>
<dbReference type="InterPro" id="IPR037104">
    <property type="entry name" value="Annexin_sf"/>
</dbReference>
<dbReference type="InterPro" id="IPR002392">
    <property type="entry name" value="ANX5"/>
</dbReference>
<dbReference type="PANTHER" id="PTHR10502">
    <property type="entry name" value="ANNEXIN"/>
    <property type="match status" value="1"/>
</dbReference>
<dbReference type="PANTHER" id="PTHR10502:SF26">
    <property type="entry name" value="ANNEXIN A5"/>
    <property type="match status" value="1"/>
</dbReference>
<dbReference type="Pfam" id="PF00191">
    <property type="entry name" value="Annexin"/>
    <property type="match status" value="4"/>
</dbReference>
<dbReference type="PRINTS" id="PR00196">
    <property type="entry name" value="ANNEXIN"/>
</dbReference>
<dbReference type="PRINTS" id="PR00201">
    <property type="entry name" value="ANNEXINV"/>
</dbReference>
<dbReference type="SMART" id="SM00335">
    <property type="entry name" value="ANX"/>
    <property type="match status" value="4"/>
</dbReference>
<dbReference type="SUPFAM" id="SSF47874">
    <property type="entry name" value="Annexin"/>
    <property type="match status" value="1"/>
</dbReference>
<dbReference type="PROSITE" id="PS00223">
    <property type="entry name" value="ANNEXIN_1"/>
    <property type="match status" value="4"/>
</dbReference>
<dbReference type="PROSITE" id="PS51897">
    <property type="entry name" value="ANNEXIN_2"/>
    <property type="match status" value="4"/>
</dbReference>
<protein>
    <recommendedName>
        <fullName>Annexin A5</fullName>
    </recommendedName>
    <alternativeName>
        <fullName>Anchorin CII</fullName>
    </alternativeName>
    <alternativeName>
        <fullName>Annexin V</fullName>
    </alternativeName>
    <alternativeName>
        <fullName>Annexin-5</fullName>
    </alternativeName>
    <alternativeName>
        <fullName>Calphobindin I</fullName>
        <shortName>CPB-I</shortName>
    </alternativeName>
    <alternativeName>
        <fullName>Endonexin II</fullName>
    </alternativeName>
    <alternativeName>
        <fullName>Lipocortin V</fullName>
    </alternativeName>
    <alternativeName>
        <fullName>Placental anticoagulant protein 4</fullName>
        <shortName>PP4</shortName>
    </alternativeName>
    <alternativeName>
        <fullName>Placental anticoagulant protein I</fullName>
        <shortName>PAP-I</shortName>
    </alternativeName>
    <alternativeName>
        <fullName>Thromboplastin inhibitor</fullName>
    </alternativeName>
    <alternativeName>
        <fullName>Vascular anticoagulant-alpha</fullName>
        <shortName>VAC-alpha</shortName>
    </alternativeName>
</protein>
<organism>
    <name type="scientific">Rattus norvegicus</name>
    <name type="common">Rat</name>
    <dbReference type="NCBI Taxonomy" id="10116"/>
    <lineage>
        <taxon>Eukaryota</taxon>
        <taxon>Metazoa</taxon>
        <taxon>Chordata</taxon>
        <taxon>Craniata</taxon>
        <taxon>Vertebrata</taxon>
        <taxon>Euteleostomi</taxon>
        <taxon>Mammalia</taxon>
        <taxon>Eutheria</taxon>
        <taxon>Euarchontoglires</taxon>
        <taxon>Glires</taxon>
        <taxon>Rodentia</taxon>
        <taxon>Myomorpha</taxon>
        <taxon>Muroidea</taxon>
        <taxon>Muridae</taxon>
        <taxon>Murinae</taxon>
        <taxon>Rattus</taxon>
    </lineage>
</organism>
<reference key="1">
    <citation type="journal article" date="1988" name="J. Biol. Chem.">
        <title>Five distinct calcium and phospholipid binding proteins share homology with lipocortin I.</title>
        <authorList>
            <person name="Pepinsky R.B."/>
            <person name="Tizard R."/>
            <person name="Mattaliano R.J."/>
            <person name="Sinclair L.K."/>
            <person name="Miller G.T."/>
            <person name="Browning J.L."/>
            <person name="Chow E.P."/>
            <person name="Burne C."/>
            <person name="Huang K.-S."/>
            <person name="Pratt D."/>
            <person name="Wachter L."/>
            <person name="Hession C."/>
            <person name="Frey A.Z."/>
            <person name="Wallner B.P."/>
        </authorList>
    </citation>
    <scope>NUCLEOTIDE SEQUENCE [MRNA]</scope>
</reference>
<reference key="2">
    <citation type="journal article" date="1995" name="Eur. J. Biochem.">
        <title>Structure of rat annexin V gene and molecular diversity of its transcripts.</title>
        <authorList>
            <person name="Imai Y."/>
            <person name="Kohsaka S."/>
        </authorList>
    </citation>
    <scope>NUCLEOTIDE SEQUENCE [GENOMIC DNA]</scope>
    <source>
        <strain>Wistar</strain>
    </source>
</reference>
<reference key="3">
    <citation type="submission" date="2007-07" db="UniProtKB">
        <authorList>
            <person name="Lubec G."/>
            <person name="Afjehi-Sadat L."/>
            <person name="Kang S.U."/>
        </authorList>
    </citation>
    <scope>PROTEIN SEQUENCE OF 5-16; 150-159; 192-199; 259-269 AND 289-299</scope>
    <scope>IDENTIFICATION BY MASS SPECTROMETRY</scope>
    <source>
        <strain>Sprague-Dawley</strain>
        <tissue>Brain</tissue>
        <tissue>Spinal cord</tissue>
    </source>
</reference>
<reference key="4">
    <citation type="journal article" date="1996" name="J. Neurochem.">
        <title>Molecular cloning and characterization of annexin V-binding proteins with highly hydrophilic peptide structure.</title>
        <authorList>
            <person name="Ohsawa K."/>
            <person name="Imai Y."/>
            <person name="Ito D."/>
            <person name="Kohsaka S."/>
        </authorList>
    </citation>
    <scope>INTERACTION WITH EIF5B AND DNMT1</scope>
</reference>
<reference key="5">
    <citation type="journal article" date="2012" name="Nat. Commun.">
        <title>Quantitative maps of protein phosphorylation sites across 14 different rat organs and tissues.</title>
        <authorList>
            <person name="Lundby A."/>
            <person name="Secher A."/>
            <person name="Lage K."/>
            <person name="Nordsborg N.B."/>
            <person name="Dmytriyev A."/>
            <person name="Lundby C."/>
            <person name="Olsen J.V."/>
        </authorList>
    </citation>
    <scope>PHOSPHORYLATION [LARGE SCALE ANALYSIS] AT SER-35</scope>
    <scope>IDENTIFICATION BY MASS SPECTROMETRY [LARGE SCALE ANALYSIS]</scope>
</reference>
<reference key="6">
    <citation type="journal article" date="1993" name="Science">
        <title>Rat annexin V crystal structure: Ca(2+)-induced conformational changes.</title>
        <authorList>
            <person name="Concha N.O."/>
            <person name="Head J.F."/>
            <person name="Kaetzel M.A."/>
            <person name="Dedman J.R."/>
            <person name="Seaton B.A."/>
        </authorList>
    </citation>
    <scope>X-RAY CRYSTALLOGRAPHY (1.9 ANGSTROMS)</scope>
</reference>
<reference key="7">
    <citation type="journal article" date="1995" name="Nat. Struct. Biol.">
        <title>Ca(2+)-bridging mechanism and phospholipid head group recognition in the membrane-binding protein annexin V.</title>
        <authorList>
            <person name="Swairjo M.A."/>
            <person name="Concha N.O."/>
            <person name="Kaetzel M.A."/>
            <person name="Dedman J.R."/>
            <person name="Seaton B.A."/>
        </authorList>
    </citation>
    <scope>X-RAY CRYSTALLOGRAPHY (1.9 ANGSTROMS)</scope>
    <scope>CLEAVAGE OF INITIATOR METHIONINE</scope>
    <scope>ACETYLATION AT ALA-2</scope>
    <source>
        <tissue>Kidney</tissue>
    </source>
</reference>
<reference key="8">
    <citation type="journal article" date="1998" name="Biochemistry">
        <title>Mutational and crystallographic analyses of interfacial residues in annexin V suggest direct interactions with phospholipid membrane components.</title>
        <authorList>
            <person name="Campos B."/>
            <person name="Mo Y.D."/>
            <person name="Mealy T.R."/>
            <person name="Li C.W."/>
            <person name="Swairjo M.A."/>
            <person name="Balch C."/>
            <person name="Head J.F."/>
            <person name="Retzinger G."/>
            <person name="Dedman J.R."/>
            <person name="Seaton B.A."/>
        </authorList>
    </citation>
    <scope>X-RAY CRYSTALLOGRAPHY (2.0 ANGSTROMS) OF 3-320</scope>
</reference>